<reference key="1">
    <citation type="journal article" date="2005" name="Science">
        <title>The transcriptional landscape of the mammalian genome.</title>
        <authorList>
            <person name="Carninci P."/>
            <person name="Kasukawa T."/>
            <person name="Katayama S."/>
            <person name="Gough J."/>
            <person name="Frith M.C."/>
            <person name="Maeda N."/>
            <person name="Oyama R."/>
            <person name="Ravasi T."/>
            <person name="Lenhard B."/>
            <person name="Wells C."/>
            <person name="Kodzius R."/>
            <person name="Shimokawa K."/>
            <person name="Bajic V.B."/>
            <person name="Brenner S.E."/>
            <person name="Batalov S."/>
            <person name="Forrest A.R."/>
            <person name="Zavolan M."/>
            <person name="Davis M.J."/>
            <person name="Wilming L.G."/>
            <person name="Aidinis V."/>
            <person name="Allen J.E."/>
            <person name="Ambesi-Impiombato A."/>
            <person name="Apweiler R."/>
            <person name="Aturaliya R.N."/>
            <person name="Bailey T.L."/>
            <person name="Bansal M."/>
            <person name="Baxter L."/>
            <person name="Beisel K.W."/>
            <person name="Bersano T."/>
            <person name="Bono H."/>
            <person name="Chalk A.M."/>
            <person name="Chiu K.P."/>
            <person name="Choudhary V."/>
            <person name="Christoffels A."/>
            <person name="Clutterbuck D.R."/>
            <person name="Crowe M.L."/>
            <person name="Dalla E."/>
            <person name="Dalrymple B.P."/>
            <person name="de Bono B."/>
            <person name="Della Gatta G."/>
            <person name="di Bernardo D."/>
            <person name="Down T."/>
            <person name="Engstrom P."/>
            <person name="Fagiolini M."/>
            <person name="Faulkner G."/>
            <person name="Fletcher C.F."/>
            <person name="Fukushima T."/>
            <person name="Furuno M."/>
            <person name="Futaki S."/>
            <person name="Gariboldi M."/>
            <person name="Georgii-Hemming P."/>
            <person name="Gingeras T.R."/>
            <person name="Gojobori T."/>
            <person name="Green R.E."/>
            <person name="Gustincich S."/>
            <person name="Harbers M."/>
            <person name="Hayashi Y."/>
            <person name="Hensch T.K."/>
            <person name="Hirokawa N."/>
            <person name="Hill D."/>
            <person name="Huminiecki L."/>
            <person name="Iacono M."/>
            <person name="Ikeo K."/>
            <person name="Iwama A."/>
            <person name="Ishikawa T."/>
            <person name="Jakt M."/>
            <person name="Kanapin A."/>
            <person name="Katoh M."/>
            <person name="Kawasawa Y."/>
            <person name="Kelso J."/>
            <person name="Kitamura H."/>
            <person name="Kitano H."/>
            <person name="Kollias G."/>
            <person name="Krishnan S.P."/>
            <person name="Kruger A."/>
            <person name="Kummerfeld S.K."/>
            <person name="Kurochkin I.V."/>
            <person name="Lareau L.F."/>
            <person name="Lazarevic D."/>
            <person name="Lipovich L."/>
            <person name="Liu J."/>
            <person name="Liuni S."/>
            <person name="McWilliam S."/>
            <person name="Madan Babu M."/>
            <person name="Madera M."/>
            <person name="Marchionni L."/>
            <person name="Matsuda H."/>
            <person name="Matsuzawa S."/>
            <person name="Miki H."/>
            <person name="Mignone F."/>
            <person name="Miyake S."/>
            <person name="Morris K."/>
            <person name="Mottagui-Tabar S."/>
            <person name="Mulder N."/>
            <person name="Nakano N."/>
            <person name="Nakauchi H."/>
            <person name="Ng P."/>
            <person name="Nilsson R."/>
            <person name="Nishiguchi S."/>
            <person name="Nishikawa S."/>
            <person name="Nori F."/>
            <person name="Ohara O."/>
            <person name="Okazaki Y."/>
            <person name="Orlando V."/>
            <person name="Pang K.C."/>
            <person name="Pavan W.J."/>
            <person name="Pavesi G."/>
            <person name="Pesole G."/>
            <person name="Petrovsky N."/>
            <person name="Piazza S."/>
            <person name="Reed J."/>
            <person name="Reid J.F."/>
            <person name="Ring B.Z."/>
            <person name="Ringwald M."/>
            <person name="Rost B."/>
            <person name="Ruan Y."/>
            <person name="Salzberg S.L."/>
            <person name="Sandelin A."/>
            <person name="Schneider C."/>
            <person name="Schoenbach C."/>
            <person name="Sekiguchi K."/>
            <person name="Semple C.A."/>
            <person name="Seno S."/>
            <person name="Sessa L."/>
            <person name="Sheng Y."/>
            <person name="Shibata Y."/>
            <person name="Shimada H."/>
            <person name="Shimada K."/>
            <person name="Silva D."/>
            <person name="Sinclair B."/>
            <person name="Sperling S."/>
            <person name="Stupka E."/>
            <person name="Sugiura K."/>
            <person name="Sultana R."/>
            <person name="Takenaka Y."/>
            <person name="Taki K."/>
            <person name="Tammoja K."/>
            <person name="Tan S.L."/>
            <person name="Tang S."/>
            <person name="Taylor M.S."/>
            <person name="Tegner J."/>
            <person name="Teichmann S.A."/>
            <person name="Ueda H.R."/>
            <person name="van Nimwegen E."/>
            <person name="Verardo R."/>
            <person name="Wei C.L."/>
            <person name="Yagi K."/>
            <person name="Yamanishi H."/>
            <person name="Zabarovsky E."/>
            <person name="Zhu S."/>
            <person name="Zimmer A."/>
            <person name="Hide W."/>
            <person name="Bult C."/>
            <person name="Grimmond S.M."/>
            <person name="Teasdale R.D."/>
            <person name="Liu E.T."/>
            <person name="Brusic V."/>
            <person name="Quackenbush J."/>
            <person name="Wahlestedt C."/>
            <person name="Mattick J.S."/>
            <person name="Hume D.A."/>
            <person name="Kai C."/>
            <person name="Sasaki D."/>
            <person name="Tomaru Y."/>
            <person name="Fukuda S."/>
            <person name="Kanamori-Katayama M."/>
            <person name="Suzuki M."/>
            <person name="Aoki J."/>
            <person name="Arakawa T."/>
            <person name="Iida J."/>
            <person name="Imamura K."/>
            <person name="Itoh M."/>
            <person name="Kato T."/>
            <person name="Kawaji H."/>
            <person name="Kawagashira N."/>
            <person name="Kawashima T."/>
            <person name="Kojima M."/>
            <person name="Kondo S."/>
            <person name="Konno H."/>
            <person name="Nakano K."/>
            <person name="Ninomiya N."/>
            <person name="Nishio T."/>
            <person name="Okada M."/>
            <person name="Plessy C."/>
            <person name="Shibata K."/>
            <person name="Shiraki T."/>
            <person name="Suzuki S."/>
            <person name="Tagami M."/>
            <person name="Waki K."/>
            <person name="Watahiki A."/>
            <person name="Okamura-Oho Y."/>
            <person name="Suzuki H."/>
            <person name="Kawai J."/>
            <person name="Hayashizaki Y."/>
        </authorList>
    </citation>
    <scope>NUCLEOTIDE SEQUENCE [LARGE SCALE MRNA]</scope>
    <source>
        <strain>C57BL/6J</strain>
        <strain>NOD</strain>
        <tissue>Kidney</tissue>
        <tissue>Pancreas</tissue>
        <tissue>Placenta</tissue>
        <tissue>Stomach</tissue>
        <tissue>Thymus</tissue>
    </source>
</reference>
<reference key="2">
    <citation type="journal article" date="2004" name="Genome Res.">
        <title>The status, quality, and expansion of the NIH full-length cDNA project: the Mammalian Gene Collection (MGC).</title>
        <authorList>
            <consortium name="The MGC Project Team"/>
        </authorList>
    </citation>
    <scope>NUCLEOTIDE SEQUENCE [LARGE SCALE MRNA]</scope>
    <source>
        <strain>FVB/N-3</strain>
    </source>
</reference>
<reference key="3">
    <citation type="journal article" date="2012" name="FEBS J.">
        <title>Evidence that Yih1 resides in a complex with ribosomes.</title>
        <authorList>
            <person name="Waller T."/>
            <person name="Lee S.J."/>
            <person name="Sattlegger E."/>
        </authorList>
    </citation>
    <scope>INTERACTION WITH IMPACT</scope>
</reference>
<reference key="4">
    <citation type="journal article" date="2021" name="Int. J. Biochem. Cell Biol.">
        <title>Deletion of ribosomal paralogs Rpl39 and Rpl39l compromises cell proliferation via protein synthesis and mitochondrial activity.</title>
        <authorList>
            <person name="Zou Q."/>
            <person name="Qi H."/>
        </authorList>
    </citation>
    <scope>FUNCTION</scope>
</reference>
<reference evidence="5" key="5">
    <citation type="journal article" date="2022" name="Nature">
        <title>A male germ-cell-specific ribosome controls male fertility.</title>
        <authorList>
            <person name="Li H."/>
            <person name="Huo Y."/>
            <person name="He X."/>
            <person name="Yao L."/>
            <person name="Zhang H."/>
            <person name="Cui Y."/>
            <person name="Xiao H."/>
            <person name="Xie W."/>
            <person name="Zhang D."/>
            <person name="Wang Y."/>
            <person name="Zhang S."/>
            <person name="Tu H."/>
            <person name="Cheng Y."/>
            <person name="Guo Y."/>
            <person name="Cao X."/>
            <person name="Zhu Y."/>
            <person name="Jiang T."/>
            <person name="Guo X."/>
            <person name="Qin Y."/>
            <person name="Sha J."/>
        </authorList>
    </citation>
    <scope>STRUCTURE BY ELECTRON MICROSCOPY (3.03 ANGSTROMS) OF RIBOSOME</scope>
    <scope>FUNCTION</scope>
    <scope>SUBUNIT</scope>
    <scope>SUBCELLULAR LOCATION</scope>
</reference>
<name>RL39_MOUSE</name>
<accession>P62892</accession>
<accession>P02404</accession>
<accession>P39025</accession>
<accession>Q9BYF2</accession>
<gene>
    <name type="primary">Rpl39</name>
</gene>
<protein>
    <recommendedName>
        <fullName evidence="4">Large ribosomal subunit protein eL39</fullName>
    </recommendedName>
    <alternativeName>
        <fullName>60S ribosomal protein L39</fullName>
    </alternativeName>
</protein>
<evidence type="ECO:0000269" key="1">
    <source>
    </source>
</evidence>
<evidence type="ECO:0000269" key="2">
    <source>
    </source>
</evidence>
<evidence type="ECO:0000269" key="3">
    <source>
    </source>
</evidence>
<evidence type="ECO:0000305" key="4"/>
<evidence type="ECO:0007744" key="5">
    <source>
        <dbReference type="PDB" id="7CPU"/>
    </source>
</evidence>
<keyword id="KW-0002">3D-structure</keyword>
<keyword id="KW-0963">Cytoplasm</keyword>
<keyword id="KW-1185">Reference proteome</keyword>
<keyword id="KW-0687">Ribonucleoprotein</keyword>
<keyword id="KW-0689">Ribosomal protein</keyword>
<feature type="chain" id="PRO_0000127025" description="Large ribosomal subunit protein eL39">
    <location>
        <begin position="1"/>
        <end position="51"/>
    </location>
</feature>
<organism>
    <name type="scientific">Mus musculus</name>
    <name type="common">Mouse</name>
    <dbReference type="NCBI Taxonomy" id="10090"/>
    <lineage>
        <taxon>Eukaryota</taxon>
        <taxon>Metazoa</taxon>
        <taxon>Chordata</taxon>
        <taxon>Craniata</taxon>
        <taxon>Vertebrata</taxon>
        <taxon>Euteleostomi</taxon>
        <taxon>Mammalia</taxon>
        <taxon>Eutheria</taxon>
        <taxon>Euarchontoglires</taxon>
        <taxon>Glires</taxon>
        <taxon>Rodentia</taxon>
        <taxon>Myomorpha</taxon>
        <taxon>Muroidea</taxon>
        <taxon>Muridae</taxon>
        <taxon>Murinae</taxon>
        <taxon>Mus</taxon>
        <taxon>Mus</taxon>
    </lineage>
</organism>
<proteinExistence type="evidence at protein level"/>
<dbReference type="EMBL" id="AK002591">
    <property type="protein sequence ID" value="BAB22212.1"/>
    <property type="molecule type" value="mRNA"/>
</dbReference>
<dbReference type="EMBL" id="AK005511">
    <property type="protein sequence ID" value="BAB24090.1"/>
    <property type="molecule type" value="mRNA"/>
</dbReference>
<dbReference type="EMBL" id="AK007821">
    <property type="protein sequence ID" value="BAB25284.1"/>
    <property type="molecule type" value="mRNA"/>
</dbReference>
<dbReference type="EMBL" id="AK008853">
    <property type="protein sequence ID" value="BAB25930.1"/>
    <property type="molecule type" value="mRNA"/>
</dbReference>
<dbReference type="EMBL" id="AK013381">
    <property type="protein sequence ID" value="BAB28820.1"/>
    <property type="molecule type" value="mRNA"/>
</dbReference>
<dbReference type="EMBL" id="AK028139">
    <property type="protein sequence ID" value="BAC25767.1"/>
    <property type="molecule type" value="mRNA"/>
</dbReference>
<dbReference type="EMBL" id="AK088761">
    <property type="protein sequence ID" value="BAC40552.1"/>
    <property type="molecule type" value="mRNA"/>
</dbReference>
<dbReference type="EMBL" id="BC039092">
    <property type="protein sequence ID" value="AAH39092.1"/>
    <property type="molecule type" value="mRNA"/>
</dbReference>
<dbReference type="CCDS" id="CCDS40927.1"/>
<dbReference type="RefSeq" id="NP_080331.1">
    <property type="nucleotide sequence ID" value="NM_026055.3"/>
</dbReference>
<dbReference type="PDB" id="6SWA">
    <property type="method" value="EM"/>
    <property type="resolution" value="3.10 A"/>
    <property type="chains" value="j=1-51"/>
</dbReference>
<dbReference type="PDB" id="7CPU">
    <property type="method" value="EM"/>
    <property type="resolution" value="2.82 A"/>
    <property type="chains" value="Ll=1-51"/>
</dbReference>
<dbReference type="PDB" id="7LS1">
    <property type="method" value="EM"/>
    <property type="resolution" value="3.30 A"/>
    <property type="chains" value="f2=1-51"/>
</dbReference>
<dbReference type="PDB" id="7LS2">
    <property type="method" value="EM"/>
    <property type="resolution" value="3.10 A"/>
    <property type="chains" value="f2=1-51"/>
</dbReference>
<dbReference type="PDB" id="8P8N">
    <property type="method" value="EM"/>
    <property type="resolution" value="2.15 A"/>
    <property type="chains" value="2=1-51"/>
</dbReference>
<dbReference type="PDBsum" id="6SWA"/>
<dbReference type="PDBsum" id="7CPU"/>
<dbReference type="PDBsum" id="7LS1"/>
<dbReference type="PDBsum" id="7LS2"/>
<dbReference type="PDBsum" id="8P8N"/>
<dbReference type="EMDB" id="EMD-17550"/>
<dbReference type="EMDB" id="EMD-23500"/>
<dbReference type="EMDB" id="EMD-23501"/>
<dbReference type="SMR" id="P62892"/>
<dbReference type="BioGRID" id="212046">
    <property type="interactions" value="44"/>
</dbReference>
<dbReference type="ComplexPortal" id="CPX-5262">
    <property type="entry name" value="60S cytosolic large ribosomal subunit"/>
</dbReference>
<dbReference type="ComplexPortal" id="CPX-7663">
    <property type="entry name" value="60S cytosolic large ribosomal subunit, striated muscle variant"/>
</dbReference>
<dbReference type="FunCoup" id="P62892">
    <property type="interactions" value="1024"/>
</dbReference>
<dbReference type="STRING" id="10090.ENSMUSP00000110886"/>
<dbReference type="iPTMnet" id="P62892"/>
<dbReference type="PhosphoSitePlus" id="P62892"/>
<dbReference type="jPOST" id="P62892"/>
<dbReference type="PaxDb" id="10090-ENSMUSP00000110886"/>
<dbReference type="PeptideAtlas" id="P62892"/>
<dbReference type="ProteomicsDB" id="299822"/>
<dbReference type="Pumba" id="P62892"/>
<dbReference type="TopDownProteomics" id="P62892"/>
<dbReference type="DNASU" id="67248"/>
<dbReference type="Ensembl" id="ENSMUST00000115231.4">
    <property type="protein sequence ID" value="ENSMUSP00000110886.4"/>
    <property type="gene ID" value="ENSMUSG00000079641.4"/>
</dbReference>
<dbReference type="GeneID" id="67248"/>
<dbReference type="KEGG" id="mmu:67248"/>
<dbReference type="UCSC" id="uc009syc.1">
    <property type="organism name" value="mouse"/>
</dbReference>
<dbReference type="AGR" id="MGI:1914498"/>
<dbReference type="CTD" id="6170"/>
<dbReference type="MGI" id="MGI:1914498">
    <property type="gene designation" value="Rpl39"/>
</dbReference>
<dbReference type="VEuPathDB" id="HostDB:ENSMUSG00000079641"/>
<dbReference type="eggNOG" id="KOG0002">
    <property type="taxonomic scope" value="Eukaryota"/>
</dbReference>
<dbReference type="GeneTree" id="ENSGT00390000014814"/>
<dbReference type="HOGENOM" id="CLU_181948_3_0_1"/>
<dbReference type="InParanoid" id="P62892"/>
<dbReference type="OMA" id="RRTKMNI"/>
<dbReference type="OrthoDB" id="444696at2759"/>
<dbReference type="PhylomeDB" id="P62892"/>
<dbReference type="TreeFam" id="TF300223"/>
<dbReference type="Reactome" id="R-MMU-156827">
    <property type="pathway name" value="L13a-mediated translational silencing of Ceruloplasmin expression"/>
</dbReference>
<dbReference type="Reactome" id="R-MMU-1799339">
    <property type="pathway name" value="SRP-dependent cotranslational protein targeting to membrane"/>
</dbReference>
<dbReference type="Reactome" id="R-MMU-6791226">
    <property type="pathway name" value="Major pathway of rRNA processing in the nucleolus and cytosol"/>
</dbReference>
<dbReference type="Reactome" id="R-MMU-72689">
    <property type="pathway name" value="Formation of a pool of free 40S subunits"/>
</dbReference>
<dbReference type="Reactome" id="R-MMU-72706">
    <property type="pathway name" value="GTP hydrolysis and joining of the 60S ribosomal subunit"/>
</dbReference>
<dbReference type="Reactome" id="R-MMU-975956">
    <property type="pathway name" value="Nonsense Mediated Decay (NMD) independent of the Exon Junction Complex (EJC)"/>
</dbReference>
<dbReference type="Reactome" id="R-MMU-975957">
    <property type="pathway name" value="Nonsense Mediated Decay (NMD) enhanced by the Exon Junction Complex (EJC)"/>
</dbReference>
<dbReference type="BioGRID-ORCS" id="67248">
    <property type="hits" value="7 hits in 33 CRISPR screens"/>
</dbReference>
<dbReference type="ChiTaRS" id="Rpl39">
    <property type="organism name" value="mouse"/>
</dbReference>
<dbReference type="PRO" id="PR:P62892"/>
<dbReference type="Proteomes" id="UP000000589">
    <property type="component" value="Chromosome X"/>
</dbReference>
<dbReference type="RNAct" id="P62892">
    <property type="molecule type" value="protein"/>
</dbReference>
<dbReference type="Bgee" id="ENSMUSG00000079641">
    <property type="expression patterns" value="Expressed in yolk sac and 78 other cell types or tissues"/>
</dbReference>
<dbReference type="ExpressionAtlas" id="P62892">
    <property type="expression patterns" value="baseline and differential"/>
</dbReference>
<dbReference type="GO" id="GO:0005737">
    <property type="term" value="C:cytoplasm"/>
    <property type="evidence" value="ECO:0000314"/>
    <property type="project" value="ComplexPortal"/>
</dbReference>
<dbReference type="GO" id="GO:0005829">
    <property type="term" value="C:cytosol"/>
    <property type="evidence" value="ECO:0000304"/>
    <property type="project" value="Reactome"/>
</dbReference>
<dbReference type="GO" id="GO:0022625">
    <property type="term" value="C:cytosolic large ribosomal subunit"/>
    <property type="evidence" value="ECO:0000314"/>
    <property type="project" value="UniProtKB"/>
</dbReference>
<dbReference type="GO" id="GO:0005615">
    <property type="term" value="C:extracellular space"/>
    <property type="evidence" value="ECO:0007669"/>
    <property type="project" value="Ensembl"/>
</dbReference>
<dbReference type="GO" id="GO:0003735">
    <property type="term" value="F:structural constituent of ribosome"/>
    <property type="evidence" value="ECO:0000314"/>
    <property type="project" value="UniProtKB"/>
</dbReference>
<dbReference type="GO" id="GO:0019731">
    <property type="term" value="P:antibacterial humoral response"/>
    <property type="evidence" value="ECO:0007669"/>
    <property type="project" value="Ensembl"/>
</dbReference>
<dbReference type="GO" id="GO:0061844">
    <property type="term" value="P:antimicrobial humoral immune response mediated by antimicrobial peptide"/>
    <property type="evidence" value="ECO:0007669"/>
    <property type="project" value="Ensembl"/>
</dbReference>
<dbReference type="GO" id="GO:0002181">
    <property type="term" value="P:cytoplasmic translation"/>
    <property type="evidence" value="ECO:0000315"/>
    <property type="project" value="UniProtKB"/>
</dbReference>
<dbReference type="GO" id="GO:0050830">
    <property type="term" value="P:defense response to Gram-positive bacterium"/>
    <property type="evidence" value="ECO:0007669"/>
    <property type="project" value="Ensembl"/>
</dbReference>
<dbReference type="GO" id="GO:0002227">
    <property type="term" value="P:innate immune response in mucosa"/>
    <property type="evidence" value="ECO:0007669"/>
    <property type="project" value="Ensembl"/>
</dbReference>
<dbReference type="FunFam" id="1.10.1620.10:FF:000001">
    <property type="entry name" value="60S ribosomal protein-like L39"/>
    <property type="match status" value="1"/>
</dbReference>
<dbReference type="Gene3D" id="1.10.1620.10">
    <property type="entry name" value="Ribosomal protein L39e"/>
    <property type="match status" value="1"/>
</dbReference>
<dbReference type="HAMAP" id="MF_00629">
    <property type="entry name" value="Ribosomal_eL39"/>
    <property type="match status" value="1"/>
</dbReference>
<dbReference type="InterPro" id="IPR000077">
    <property type="entry name" value="Ribosomal_eL39"/>
</dbReference>
<dbReference type="InterPro" id="IPR020083">
    <property type="entry name" value="Ribosomal_eL39_CS"/>
</dbReference>
<dbReference type="InterPro" id="IPR023626">
    <property type="entry name" value="Ribosomal_eL39_dom_sf"/>
</dbReference>
<dbReference type="PANTHER" id="PTHR19970:SF0">
    <property type="entry name" value="LARGE RIBOSOMAL SUBUNIT PROTEIN EL39"/>
    <property type="match status" value="1"/>
</dbReference>
<dbReference type="PANTHER" id="PTHR19970">
    <property type="entry name" value="RIBOSOMAL PROTEIN L39E"/>
    <property type="match status" value="1"/>
</dbReference>
<dbReference type="Pfam" id="PF00832">
    <property type="entry name" value="Ribosomal_L39"/>
    <property type="match status" value="1"/>
</dbReference>
<dbReference type="SUPFAM" id="SSF48662">
    <property type="entry name" value="Ribosomal protein L39e"/>
    <property type="match status" value="1"/>
</dbReference>
<dbReference type="PROSITE" id="PS00051">
    <property type="entry name" value="RIBOSOMAL_L39E"/>
    <property type="match status" value="1"/>
</dbReference>
<comment type="function">
    <text evidence="2 3">RNA-binding component of the large ribosomal subunit (PubMed:36517592). The ribosome is a large ribonucleoprotein complex responsible for the synthesis of proteins in the cell (PubMed:34428590, PubMed:36517592).</text>
</comment>
<comment type="subunit">
    <text evidence="1 3">Component of the large ribosomal subunit (PubMed:36517592). Interacts with IMPACT (PubMed:22404850).</text>
</comment>
<comment type="subcellular location">
    <subcellularLocation>
        <location evidence="3">Cytoplasm</location>
    </subcellularLocation>
</comment>
<comment type="similarity">
    <text evidence="4">Belongs to the eukaryotic ribosomal protein eL39 family.</text>
</comment>
<sequence>MSSHKTFRIKRFLAKKQKQNRPIPQWIRMKTGNKIRYNSKRRHWRRTKLGL</sequence>